<comment type="function">
    <text evidence="1">May be involved in the conjugation of reduced glutathione to a wide number of exogenous and endogenous hydrophobic electrophiles and have a detoxification role against certain herbicides.</text>
</comment>
<comment type="catalytic activity">
    <reaction>
        <text>RX + glutathione = an S-substituted glutathione + a halide anion + H(+)</text>
        <dbReference type="Rhea" id="RHEA:16437"/>
        <dbReference type="ChEBI" id="CHEBI:15378"/>
        <dbReference type="ChEBI" id="CHEBI:16042"/>
        <dbReference type="ChEBI" id="CHEBI:17792"/>
        <dbReference type="ChEBI" id="CHEBI:57925"/>
        <dbReference type="ChEBI" id="CHEBI:90779"/>
        <dbReference type="EC" id="2.5.1.18"/>
    </reaction>
</comment>
<comment type="subcellular location">
    <subcellularLocation>
        <location evidence="2">Cytoplasm</location>
        <location evidence="2">Cytosol</location>
    </subcellularLocation>
</comment>
<comment type="similarity">
    <text evidence="2">Belongs to the GST superfamily. Tau family.</text>
</comment>
<accession>Q9ZW24</accession>
<protein>
    <recommendedName>
        <fullName>Glutathione S-transferase U7</fullName>
        <shortName>AtGSTU7</shortName>
        <ecNumber>2.5.1.18</ecNumber>
    </recommendedName>
    <alternativeName>
        <fullName>GST class-tau member 7</fullName>
    </alternativeName>
    <alternativeName>
        <fullName>Glutathione S-transferase 25</fullName>
    </alternativeName>
</protein>
<proteinExistence type="evidence at transcript level"/>
<organism>
    <name type="scientific">Arabidopsis thaliana</name>
    <name type="common">Mouse-ear cress</name>
    <dbReference type="NCBI Taxonomy" id="3702"/>
    <lineage>
        <taxon>Eukaryota</taxon>
        <taxon>Viridiplantae</taxon>
        <taxon>Streptophyta</taxon>
        <taxon>Embryophyta</taxon>
        <taxon>Tracheophyta</taxon>
        <taxon>Spermatophyta</taxon>
        <taxon>Magnoliopsida</taxon>
        <taxon>eudicotyledons</taxon>
        <taxon>Gunneridae</taxon>
        <taxon>Pentapetalae</taxon>
        <taxon>rosids</taxon>
        <taxon>malvids</taxon>
        <taxon>Brassicales</taxon>
        <taxon>Brassicaceae</taxon>
        <taxon>Camelineae</taxon>
        <taxon>Arabidopsis</taxon>
    </lineage>
</organism>
<sequence length="227" mass="26113">MAERSNSEEVKLLGMWASPFSRRIEIALTLKGVSYEFLEQDITNKSSLLLQLNPVHKMIPVLVHNGKPISESLVILEYIDETWRDNPILPQDPYERTMARFWSKFVDEQIYVTAMKVVGKTGKERDAVVEATRDLLMFLEKELVGKDFLGGKSLGFVDIVATLVAFWLMRTEEIVGVKVVPVEKFPEIHRWVKNLLGNDVIKKCIPPEDEHLKYIRARMEKLNIKSA</sequence>
<reference key="1">
    <citation type="journal article" date="2002" name="Plant Mol. Biol.">
        <title>Probing the diversity of the Arabidopsis glutathione S-transferase gene family.</title>
        <authorList>
            <person name="Wagner U."/>
            <person name="Edwards R."/>
            <person name="Dixon D.P."/>
            <person name="Mauch F."/>
        </authorList>
    </citation>
    <scope>NUCLEOTIDE SEQUENCE [MRNA]</scope>
    <scope>GENE FAMILY</scope>
    <scope>NOMENCLATURE</scope>
    <source>
        <strain>cv. Columbia</strain>
    </source>
</reference>
<reference key="2">
    <citation type="journal article" date="1999" name="Nature">
        <title>Sequence and analysis of chromosome 2 of the plant Arabidopsis thaliana.</title>
        <authorList>
            <person name="Lin X."/>
            <person name="Kaul S."/>
            <person name="Rounsley S.D."/>
            <person name="Shea T.P."/>
            <person name="Benito M.-I."/>
            <person name="Town C.D."/>
            <person name="Fujii C.Y."/>
            <person name="Mason T.M."/>
            <person name="Bowman C.L."/>
            <person name="Barnstead M.E."/>
            <person name="Feldblyum T.V."/>
            <person name="Buell C.R."/>
            <person name="Ketchum K.A."/>
            <person name="Lee J.J."/>
            <person name="Ronning C.M."/>
            <person name="Koo H.L."/>
            <person name="Moffat K.S."/>
            <person name="Cronin L.A."/>
            <person name="Shen M."/>
            <person name="Pai G."/>
            <person name="Van Aken S."/>
            <person name="Umayam L."/>
            <person name="Tallon L.J."/>
            <person name="Gill J.E."/>
            <person name="Adams M.D."/>
            <person name="Carrera A.J."/>
            <person name="Creasy T.H."/>
            <person name="Goodman H.M."/>
            <person name="Somerville C.R."/>
            <person name="Copenhaver G.P."/>
            <person name="Preuss D."/>
            <person name="Nierman W.C."/>
            <person name="White O."/>
            <person name="Eisen J.A."/>
            <person name="Salzberg S.L."/>
            <person name="Fraser C.M."/>
            <person name="Venter J.C."/>
        </authorList>
    </citation>
    <scope>NUCLEOTIDE SEQUENCE [LARGE SCALE GENOMIC DNA]</scope>
    <source>
        <strain>cv. Columbia</strain>
    </source>
</reference>
<reference key="3">
    <citation type="journal article" date="2017" name="Plant J.">
        <title>Araport11: a complete reannotation of the Arabidopsis thaliana reference genome.</title>
        <authorList>
            <person name="Cheng C.Y."/>
            <person name="Krishnakumar V."/>
            <person name="Chan A.P."/>
            <person name="Thibaud-Nissen F."/>
            <person name="Schobel S."/>
            <person name="Town C.D."/>
        </authorList>
    </citation>
    <scope>GENOME REANNOTATION</scope>
    <source>
        <strain>cv. Columbia</strain>
    </source>
</reference>
<reference key="4">
    <citation type="journal article" date="2003" name="Science">
        <title>Empirical analysis of transcriptional activity in the Arabidopsis genome.</title>
        <authorList>
            <person name="Yamada K."/>
            <person name="Lim J."/>
            <person name="Dale J.M."/>
            <person name="Chen H."/>
            <person name="Shinn P."/>
            <person name="Palm C.J."/>
            <person name="Southwick A.M."/>
            <person name="Wu H.C."/>
            <person name="Kim C.J."/>
            <person name="Nguyen M."/>
            <person name="Pham P.K."/>
            <person name="Cheuk R.F."/>
            <person name="Karlin-Newmann G."/>
            <person name="Liu S.X."/>
            <person name="Lam B."/>
            <person name="Sakano H."/>
            <person name="Wu T."/>
            <person name="Yu G."/>
            <person name="Miranda M."/>
            <person name="Quach H.L."/>
            <person name="Tripp M."/>
            <person name="Chang C.H."/>
            <person name="Lee J.M."/>
            <person name="Toriumi M.J."/>
            <person name="Chan M.M."/>
            <person name="Tang C.C."/>
            <person name="Onodera C.S."/>
            <person name="Deng J.M."/>
            <person name="Akiyama K."/>
            <person name="Ansari Y."/>
            <person name="Arakawa T."/>
            <person name="Banh J."/>
            <person name="Banno F."/>
            <person name="Bowser L."/>
            <person name="Brooks S.Y."/>
            <person name="Carninci P."/>
            <person name="Chao Q."/>
            <person name="Choy N."/>
            <person name="Enju A."/>
            <person name="Goldsmith A.D."/>
            <person name="Gurjal M."/>
            <person name="Hansen N.F."/>
            <person name="Hayashizaki Y."/>
            <person name="Johnson-Hopson C."/>
            <person name="Hsuan V.W."/>
            <person name="Iida K."/>
            <person name="Karnes M."/>
            <person name="Khan S."/>
            <person name="Koesema E."/>
            <person name="Ishida J."/>
            <person name="Jiang P.X."/>
            <person name="Jones T."/>
            <person name="Kawai J."/>
            <person name="Kamiya A."/>
            <person name="Meyers C."/>
            <person name="Nakajima M."/>
            <person name="Narusaka M."/>
            <person name="Seki M."/>
            <person name="Sakurai T."/>
            <person name="Satou M."/>
            <person name="Tamse R."/>
            <person name="Vaysberg M."/>
            <person name="Wallender E.K."/>
            <person name="Wong C."/>
            <person name="Yamamura Y."/>
            <person name="Yuan S."/>
            <person name="Shinozaki K."/>
            <person name="Davis R.W."/>
            <person name="Theologis A."/>
            <person name="Ecker J.R."/>
        </authorList>
    </citation>
    <scope>NUCLEOTIDE SEQUENCE [LARGE SCALE MRNA]</scope>
    <source>
        <strain>cv. Columbia</strain>
    </source>
</reference>
<reference key="5">
    <citation type="submission" date="2002-03" db="EMBL/GenBank/DDBJ databases">
        <title>Full-length cDNA from Arabidopsis thaliana.</title>
        <authorList>
            <person name="Brover V.V."/>
            <person name="Troukhan M.E."/>
            <person name="Alexandrov N.A."/>
            <person name="Lu Y.-P."/>
            <person name="Flavell R.B."/>
            <person name="Feldmann K.A."/>
        </authorList>
    </citation>
    <scope>NUCLEOTIDE SEQUENCE [LARGE SCALE MRNA]</scope>
</reference>
<feature type="chain" id="PRO_0000413553" description="Glutathione S-transferase U7">
    <location>
        <begin position="1"/>
        <end position="227"/>
    </location>
</feature>
<feature type="domain" description="GST N-terminal">
    <location>
        <begin position="8"/>
        <end position="87"/>
    </location>
</feature>
<feature type="domain" description="GST C-terminal">
    <location>
        <begin position="92"/>
        <end position="215"/>
    </location>
</feature>
<feature type="binding site" evidence="1">
    <location>
        <begin position="18"/>
        <end position="19"/>
    </location>
    <ligand>
        <name>glutathione</name>
        <dbReference type="ChEBI" id="CHEBI:57925"/>
    </ligand>
</feature>
<feature type="binding site" evidence="1">
    <location>
        <begin position="44"/>
        <end position="45"/>
    </location>
    <ligand>
        <name>glutathione</name>
        <dbReference type="ChEBI" id="CHEBI:57925"/>
    </ligand>
</feature>
<feature type="binding site" evidence="1">
    <location>
        <begin position="58"/>
        <end position="59"/>
    </location>
    <ligand>
        <name>glutathione</name>
        <dbReference type="ChEBI" id="CHEBI:57925"/>
    </ligand>
</feature>
<feature type="binding site" evidence="1">
    <location>
        <begin position="71"/>
        <end position="72"/>
    </location>
    <ligand>
        <name>glutathione</name>
        <dbReference type="ChEBI" id="CHEBI:57925"/>
    </ligand>
</feature>
<evidence type="ECO:0000250" key="1"/>
<evidence type="ECO:0000305" key="2"/>
<dbReference type="EC" id="2.5.1.18"/>
<dbReference type="EMBL" id="AF288188">
    <property type="protein sequence ID" value="AAG30137.1"/>
    <property type="molecule type" value="mRNA"/>
</dbReference>
<dbReference type="EMBL" id="AC004561">
    <property type="protein sequence ID" value="AAC95196.1"/>
    <property type="molecule type" value="Genomic_DNA"/>
</dbReference>
<dbReference type="EMBL" id="CP002685">
    <property type="protein sequence ID" value="AEC08252.1"/>
    <property type="molecule type" value="Genomic_DNA"/>
</dbReference>
<dbReference type="EMBL" id="AY045679">
    <property type="protein sequence ID" value="AAK74037.1"/>
    <property type="molecule type" value="mRNA"/>
</dbReference>
<dbReference type="EMBL" id="AY056086">
    <property type="protein sequence ID" value="AAL06974.1"/>
    <property type="molecule type" value="mRNA"/>
</dbReference>
<dbReference type="EMBL" id="AY086358">
    <property type="protein sequence ID" value="AAM64426.1"/>
    <property type="molecule type" value="mRNA"/>
</dbReference>
<dbReference type="PIR" id="B84696">
    <property type="entry name" value="B84696"/>
</dbReference>
<dbReference type="RefSeq" id="NP_180503.1">
    <property type="nucleotide sequence ID" value="NM_128496.2"/>
</dbReference>
<dbReference type="SMR" id="Q9ZW24"/>
<dbReference type="BioGRID" id="2841">
    <property type="interactions" value="4"/>
</dbReference>
<dbReference type="FunCoup" id="Q9ZW24">
    <property type="interactions" value="151"/>
</dbReference>
<dbReference type="IntAct" id="Q9ZW24">
    <property type="interactions" value="5"/>
</dbReference>
<dbReference type="STRING" id="3702.Q9ZW24"/>
<dbReference type="iPTMnet" id="Q9ZW24"/>
<dbReference type="PaxDb" id="3702-AT2G29420.1"/>
<dbReference type="ProteomicsDB" id="247336"/>
<dbReference type="EnsemblPlants" id="AT2G29420.1">
    <property type="protein sequence ID" value="AT2G29420.1"/>
    <property type="gene ID" value="AT2G29420"/>
</dbReference>
<dbReference type="GeneID" id="817491"/>
<dbReference type="Gramene" id="AT2G29420.1">
    <property type="protein sequence ID" value="AT2G29420.1"/>
    <property type="gene ID" value="AT2G29420"/>
</dbReference>
<dbReference type="KEGG" id="ath:AT2G29420"/>
<dbReference type="Araport" id="AT2G29420"/>
<dbReference type="TAIR" id="AT2G29420">
    <property type="gene designation" value="GSTU7"/>
</dbReference>
<dbReference type="eggNOG" id="KOG0406">
    <property type="taxonomic scope" value="Eukaryota"/>
</dbReference>
<dbReference type="HOGENOM" id="CLU_011226_18_1_1"/>
<dbReference type="InParanoid" id="Q9ZW24"/>
<dbReference type="OMA" id="DKCVAPA"/>
<dbReference type="PhylomeDB" id="Q9ZW24"/>
<dbReference type="BioCyc" id="ARA:AT2G29420-MONOMER"/>
<dbReference type="PRO" id="PR:Q9ZW24"/>
<dbReference type="Proteomes" id="UP000006548">
    <property type="component" value="Chromosome 2"/>
</dbReference>
<dbReference type="ExpressionAtlas" id="Q9ZW24">
    <property type="expression patterns" value="baseline and differential"/>
</dbReference>
<dbReference type="GO" id="GO:0005737">
    <property type="term" value="C:cytoplasm"/>
    <property type="evidence" value="ECO:0000303"/>
    <property type="project" value="TAIR"/>
</dbReference>
<dbReference type="GO" id="GO:0005829">
    <property type="term" value="C:cytosol"/>
    <property type="evidence" value="ECO:0007669"/>
    <property type="project" value="UniProtKB-SubCell"/>
</dbReference>
<dbReference type="GO" id="GO:0004364">
    <property type="term" value="F:glutathione transferase activity"/>
    <property type="evidence" value="ECO:0000304"/>
    <property type="project" value="TAIR"/>
</dbReference>
<dbReference type="GO" id="GO:0006749">
    <property type="term" value="P:glutathione metabolic process"/>
    <property type="evidence" value="ECO:0007669"/>
    <property type="project" value="InterPro"/>
</dbReference>
<dbReference type="GO" id="GO:0009751">
    <property type="term" value="P:response to salicylic acid"/>
    <property type="evidence" value="ECO:0000270"/>
    <property type="project" value="TAIR"/>
</dbReference>
<dbReference type="GO" id="GO:0009407">
    <property type="term" value="P:toxin catabolic process"/>
    <property type="evidence" value="ECO:0000304"/>
    <property type="project" value="TAIR"/>
</dbReference>
<dbReference type="CDD" id="cd03185">
    <property type="entry name" value="GST_C_Tau"/>
    <property type="match status" value="1"/>
</dbReference>
<dbReference type="CDD" id="cd03058">
    <property type="entry name" value="GST_N_Tau"/>
    <property type="match status" value="1"/>
</dbReference>
<dbReference type="FunFam" id="1.20.1050.10:FF:000012">
    <property type="entry name" value="Tau class glutathione S-transferase"/>
    <property type="match status" value="1"/>
</dbReference>
<dbReference type="FunFam" id="3.40.30.10:FF:000014">
    <property type="entry name" value="Tau class glutathione S-transferase"/>
    <property type="match status" value="1"/>
</dbReference>
<dbReference type="Gene3D" id="1.20.1050.10">
    <property type="match status" value="1"/>
</dbReference>
<dbReference type="Gene3D" id="3.40.30.10">
    <property type="entry name" value="Glutaredoxin"/>
    <property type="match status" value="1"/>
</dbReference>
<dbReference type="InterPro" id="IPR010987">
    <property type="entry name" value="Glutathione-S-Trfase_C-like"/>
</dbReference>
<dbReference type="InterPro" id="IPR036282">
    <property type="entry name" value="Glutathione-S-Trfase_C_sf"/>
</dbReference>
<dbReference type="InterPro" id="IPR004045">
    <property type="entry name" value="Glutathione_S-Trfase_N"/>
</dbReference>
<dbReference type="InterPro" id="IPR004046">
    <property type="entry name" value="GST_C"/>
</dbReference>
<dbReference type="InterPro" id="IPR045074">
    <property type="entry name" value="GST_C_Tau"/>
</dbReference>
<dbReference type="InterPro" id="IPR045073">
    <property type="entry name" value="Omega/Tau-like"/>
</dbReference>
<dbReference type="InterPro" id="IPR036249">
    <property type="entry name" value="Thioredoxin-like_sf"/>
</dbReference>
<dbReference type="PANTHER" id="PTHR11260:SF536">
    <property type="entry name" value="GLUTATHIONE S-TRANSFERASE U7"/>
    <property type="match status" value="1"/>
</dbReference>
<dbReference type="PANTHER" id="PTHR11260">
    <property type="entry name" value="GLUTATHIONE S-TRANSFERASE, GST, SUPERFAMILY, GST DOMAIN CONTAINING"/>
    <property type="match status" value="1"/>
</dbReference>
<dbReference type="Pfam" id="PF00043">
    <property type="entry name" value="GST_C"/>
    <property type="match status" value="1"/>
</dbReference>
<dbReference type="Pfam" id="PF02798">
    <property type="entry name" value="GST_N"/>
    <property type="match status" value="1"/>
</dbReference>
<dbReference type="SFLD" id="SFLDG01152">
    <property type="entry name" value="Main.3:_Omega-_and_Tau-like"/>
    <property type="match status" value="1"/>
</dbReference>
<dbReference type="SFLD" id="SFLDG00358">
    <property type="entry name" value="Main_(cytGST)"/>
    <property type="match status" value="1"/>
</dbReference>
<dbReference type="SUPFAM" id="SSF47616">
    <property type="entry name" value="GST C-terminal domain-like"/>
    <property type="match status" value="1"/>
</dbReference>
<dbReference type="SUPFAM" id="SSF52833">
    <property type="entry name" value="Thioredoxin-like"/>
    <property type="match status" value="1"/>
</dbReference>
<dbReference type="PROSITE" id="PS50405">
    <property type="entry name" value="GST_CTER"/>
    <property type="match status" value="1"/>
</dbReference>
<dbReference type="PROSITE" id="PS50404">
    <property type="entry name" value="GST_NTER"/>
    <property type="match status" value="1"/>
</dbReference>
<gene>
    <name type="primary">GSTU7</name>
    <name type="synonym">GST25</name>
    <name type="ordered locus">At2g29420</name>
    <name type="ORF">F16P2.20</name>
</gene>
<keyword id="KW-0963">Cytoplasm</keyword>
<keyword id="KW-0216">Detoxification</keyword>
<keyword id="KW-1185">Reference proteome</keyword>
<keyword id="KW-0808">Transferase</keyword>
<name>GSTU7_ARATH</name>